<reference key="1">
    <citation type="journal article" date="1984" name="Cell">
        <title>The major intrinsic protein (MIP) of the bovine lens fiber membrane: characterization and structure based on cDNA cloning.</title>
        <authorList>
            <person name="Gorin M.B."/>
            <person name="Yancey S.B."/>
            <person name="Cline J."/>
            <person name="Revel J.-P."/>
            <person name="Horwitz J."/>
        </authorList>
    </citation>
    <scope>NUCLEOTIDE SEQUENCE [MRNA]</scope>
    <scope>PROTEIN SEQUENCE OF 1-39</scope>
    <scope>TISSUE SPECIFICITY</scope>
</reference>
<reference key="2">
    <citation type="journal article" date="1985" name="FEBS Lett.">
        <title>Sequence analysis of peptide fragments from the intrinsic membrane protein of calf lens fibers MP26 and its natural maturation product MP22.</title>
        <authorList>
            <person name="Ngoc L.D."/>
            <person name="Paroutaud P."/>
            <person name="Dunia I."/>
            <person name="Benedetti E.L."/>
            <person name="Hoebeke J."/>
        </authorList>
    </citation>
    <scope>PROTEIN SEQUENCE OF 1-33</scope>
    <source>
        <tissue>Lens</tissue>
    </source>
</reference>
<reference key="3">
    <citation type="journal article" date="1990" name="Eur. J. Biochem.">
        <title>Amino acid sequence of in vivo phosphorylation sites in the main intrinsic protein (MIP) of lens membranes.</title>
        <authorList>
            <person name="Lampe P.D."/>
            <person name="Johnson R.G."/>
        </authorList>
    </citation>
    <scope>PROTEIN SEQUENCE OF 239-259</scope>
    <scope>PHOSPHORYLATION AT SER-243 AND SER-245</scope>
    <scope>DEAMIDATION AT ASN-246</scope>
    <source>
        <tissue>Lens</tissue>
    </source>
</reference>
<reference key="4">
    <citation type="journal article" date="1997" name="Invest. Ophthalmol. Vis. Sci.">
        <title>Complete map and identification of the phosphorylation site of bovine lens major intrinsic protein.</title>
        <authorList>
            <person name="Schey K.L."/>
            <person name="Fowler J.G."/>
            <person name="Schwartz J.C."/>
            <person name="Busman M."/>
            <person name="Dillon J."/>
            <person name="Crouch R.K."/>
        </authorList>
    </citation>
    <scope>PHOSPHORYLATION AT SER-235</scope>
    <source>
        <tissue>Lens</tissue>
    </source>
</reference>
<reference key="5">
    <citation type="journal article" date="2013" name="Nat. Struct. Mol. Biol.">
        <title>Allosteric mechanism of water-channel gating by Ca(2+)-calmodulin.</title>
        <authorList>
            <person name="Reichow S.L."/>
            <person name="Clemens D.M."/>
            <person name="Freites J.A."/>
            <person name="Nemeth-Cahalan K.L."/>
            <person name="Heyden M."/>
            <person name="Tobias D.J."/>
            <person name="Hall J.E."/>
            <person name="Gonen T."/>
        </authorList>
    </citation>
    <scope>FUNCTION</scope>
    <scope>TRANSPORTER ACTIVITY</scope>
    <scope>ACTIVITY REGULATION</scope>
    <scope>SUBCELLULAR LOCATION</scope>
    <scope>INTERACTION WITH CALM</scope>
    <scope>MUTAGENESIS OF TYR-149; LEU-227 AND VAL-230</scope>
</reference>
<reference key="6">
    <citation type="journal article" date="2016" name="Biochim. Biophys. Acta">
        <title>The lipidation profile of aquaporin-0 correlates with the acyl composition of phosphoethanolamine lipids in lens membranes.</title>
        <authorList>
            <person name="Ismail V.S."/>
            <person name="Mosely J.A."/>
            <person name="Tapodi A."/>
            <person name="Quinlan R.A."/>
            <person name="Sanderson J.M."/>
        </authorList>
    </citation>
    <scope>FATTY ACYLATION</scope>
</reference>
<reference key="7">
    <citation type="journal article" date="2017" name="Exp. Eye Res.">
        <title>Identification of a direct Aquaporin-0 binding site in the lens-specific cytoskeletal protein filensin.</title>
        <authorList>
            <person name="Wang Z."/>
            <person name="Schey K.L."/>
        </authorList>
    </citation>
    <scope>INTERACTION WITH BFSP1</scope>
    <scope>REGION</scope>
</reference>
<reference key="8">
    <citation type="journal article" date="2019" name="Exp. Eye Res.">
        <title>BFSP1 C-terminal domains released by post-translational processing events can alter significantly the calcium regulation of AQP0 water permeability.</title>
        <authorList>
            <person name="Tapodi A."/>
            <person name="Clemens D.M."/>
            <person name="Uwineza A."/>
            <person name="Goldberg M.W."/>
            <person name="Thinon E."/>
            <person name="Heal W.P."/>
            <person name="Tate E.W."/>
            <person name="Nemeth-Cahalan K."/>
            <person name="Vorontsova I."/>
            <person name="Jarrin M."/>
            <person name="Hall J.E."/>
            <person name="Quinlan R.A."/>
        </authorList>
    </citation>
    <scope>FUNCTION</scope>
    <scope>TRANSPORTER ACTIVITY</scope>
    <scope>ACTIVITY REGULATION</scope>
    <scope>INTERACTION WITH BFSP1</scope>
</reference>
<reference key="9">
    <citation type="journal article" date="2004" name="Proc. Natl. Acad. Sci. U.S.A.">
        <title>The channel architecture of aquaporin 0 at a 2.2-A resolution.</title>
        <authorList>
            <person name="Harries W.E."/>
            <person name="Akhavan D."/>
            <person name="Miercke L.J."/>
            <person name="Khademi S."/>
            <person name="Stroud R.M."/>
        </authorList>
    </citation>
    <scope>X-RAY CRYSTALLOGRAPHY (2.24 ANGSTROMS)</scope>
    <scope>TOPOLOGY</scope>
    <scope>SUBUNIT</scope>
    <scope>MOTIF</scope>
</reference>
<reference key="10">
    <citation type="journal article" date="2006" name="J. Mol. Biol.">
        <title>Co-axial association of recombinant eye lens aquaporin-0 observed in loosely packed 3D crystals.</title>
        <authorList>
            <person name="Palanivelu D.V."/>
            <person name="Kozono D.E."/>
            <person name="Engel A."/>
            <person name="Suda K."/>
            <person name="Lustig A."/>
            <person name="Agre P."/>
            <person name="Schirmer T."/>
        </authorList>
    </citation>
    <scope>X-RAY CRYSTALLOGRAPHY (7.01 ANGSTROMS)</scope>
    <scope>TOPOLOGY</scope>
    <scope>SUBUNIT</scope>
</reference>
<keyword id="KW-0002">3D-structure</keyword>
<keyword id="KW-0965">Cell junction</keyword>
<keyword id="KW-1003">Cell membrane</keyword>
<keyword id="KW-0903">Direct protein sequencing</keyword>
<keyword id="KW-0273">Eye lens protein</keyword>
<keyword id="KW-0449">Lipoprotein</keyword>
<keyword id="KW-0472">Membrane</keyword>
<keyword id="KW-0597">Phosphoprotein</keyword>
<keyword id="KW-1185">Reference proteome</keyword>
<keyword id="KW-0677">Repeat</keyword>
<keyword id="KW-0812">Transmembrane</keyword>
<keyword id="KW-1133">Transmembrane helix</keyword>
<keyword id="KW-0813">Transport</keyword>
<sequence length="263" mass="28223">MWELRSASFWRAICAEFFASLFYVFFGLGASLRWAPGPLHVLQVALAFGLALATLVQAVGHISGAHVNPAVTFAFLVGSQMSLLRAICYMVAQLLGAVAGAAVLYSVTPPAVRGNLALNTLHPGVSVGQATIVEIFLTLQFVLCIFATYDERRNGRLGSVALAVGFSLTLGHLFGMYYTGAGMNPARSFAPAILTRNFTNHWVYWVGPVIGAGLGSLLYDFLLFPRLKSVSERLSILKGSRPSESNGQPEVTGEPVELKTQAL</sequence>
<gene>
    <name evidence="15" type="primary">MIP</name>
</gene>
<comment type="function">
    <text evidence="1 7 10">Aquaporins form homotetrameric transmembrane channels, with each monomer independently mediating water transport across the plasma membrane along its osmotic gradient (PubMed:23893133, PubMed:30790544). Specifically expressed in lens fiber cells, this aquaporin is crucial for maintaining lens water homeostasis and transparency. Beyond water permeability, it also acts as a cell-to-cell adhesion molecule, forming thin junctions between lens fiber cells that are essential for maintaining the ordered structure and transparency of the lens (By similarity).</text>
</comment>
<comment type="catalytic activity">
    <reaction evidence="7 10">
        <text>H2O(in) = H2O(out)</text>
        <dbReference type="Rhea" id="RHEA:29667"/>
        <dbReference type="ChEBI" id="CHEBI:15377"/>
    </reaction>
</comment>
<comment type="activity regulation">
    <text evidence="7 10">The water channel activity is inhibited by calcium through calmodulin/CALM.</text>
</comment>
<comment type="subunit">
    <text evidence="4 5 7 9 10">Homotetramer; each monomer provides an independent water pore (PubMed:15377788, PubMed:16309700). Two homotetramers on opposing membranes can dimerize, forming a cell-cell junction (PubMed:15377788, PubMed:16309700). Interacts with CALM; the calcium-calmodulin/CALM complex interacts with the cytoplasmic domains of two aquaporins, leading to channel closure (PubMed:23893133). Interacts with BFSP1 (via C-terminus); prevents calcium-dependent inhibition of the water channel activity (PubMed:28259670, PubMed:30790544).</text>
</comment>
<comment type="subcellular location">
    <subcellularLocation>
        <location evidence="7">Cell membrane</location>
        <topology evidence="4 5">Multi-pass membrane protein</topology>
    </subcellularLocation>
    <subcellularLocation>
        <location evidence="2">Cell junction</location>
    </subcellularLocation>
    <text evidence="2">Localizes to thin cell-cell junctions in lens fiber cells.</text>
</comment>
<comment type="tissue specificity">
    <text evidence="11">Major component of lens fiber junctions.</text>
</comment>
<comment type="developmental stage">
    <text>Higher expression in pre-natal (1-5 months gestation) than in postnatal (4-6 months) calf lens.</text>
</comment>
<comment type="domain">
    <text evidence="17">Aquaporins contain two tandem repeats each containing three membrane-spanning domains and a pore-forming loop with the signature motif Asn-Pro-Ala (NPA).</text>
</comment>
<comment type="PTM">
    <text evidence="8">Fatty acylated at Met-1 and Lys-238. The acyl modifications, in decreasing order of ion abundance, are: oleoyl (C18:1) &gt; palmitoyl (C16:0) &gt; stearoyl (C18:0) &gt; eicosenoyl (C20:1) &gt; dihomo-gamma-linolenoyl (C20:3) &gt; palmitoleoyl (C16:1) &gt; eicosadienoyl (C20:2).</text>
</comment>
<comment type="PTM">
    <text evidence="2">Subject to partial proteolytic cleavage in the eye lens core. Partial proteolysis promotes interactions between tetramers from adjoining membranes.</text>
</comment>
<comment type="similarity">
    <text evidence="16">Belongs to the MIP/aquaporin (TC 1.A.8) family.</text>
</comment>
<feature type="chain" id="PRO_0000063910" description="Lens fiber major intrinsic protein">
    <location>
        <begin position="1"/>
        <end position="263"/>
    </location>
</feature>
<feature type="topological domain" description="Cytoplasmic" evidence="4">
    <location>
        <begin position="1"/>
        <end position="9"/>
    </location>
</feature>
<feature type="transmembrane region" description="Helical; Name=1" evidence="4 18">
    <location>
        <begin position="10"/>
        <end position="29"/>
    </location>
</feature>
<feature type="topological domain" description="Extracellular" evidence="4">
    <location>
        <begin position="30"/>
        <end position="41"/>
    </location>
</feature>
<feature type="transmembrane region" description="Helical; Name=2" evidence="4 18">
    <location>
        <begin position="42"/>
        <end position="59"/>
    </location>
</feature>
<feature type="topological domain" description="Cytoplasmic" evidence="4">
    <location>
        <begin position="60"/>
        <end position="61"/>
    </location>
</feature>
<feature type="intramembrane region" description="Discontinuously helical" evidence="4 18">
    <location>
        <begin position="62"/>
        <end position="77"/>
    </location>
</feature>
<feature type="topological domain" description="Cytoplasmic" evidence="4">
    <location>
        <begin position="78"/>
        <end position="82"/>
    </location>
</feature>
<feature type="transmembrane region" description="Helical; Name=3" evidence="4 18">
    <location>
        <begin position="83"/>
        <end position="106"/>
    </location>
</feature>
<feature type="topological domain" description="Extracellular" evidence="4">
    <location>
        <begin position="107"/>
        <end position="127"/>
    </location>
</feature>
<feature type="transmembrane region" description="Helical; Name=4" evidence="4 18">
    <location>
        <begin position="128"/>
        <end position="148"/>
    </location>
</feature>
<feature type="topological domain" description="Cytoplasmic" evidence="4">
    <location>
        <begin position="149"/>
        <end position="156"/>
    </location>
</feature>
<feature type="transmembrane region" description="Helical; Name=5" evidence="4 18">
    <location>
        <begin position="157"/>
        <end position="175"/>
    </location>
</feature>
<feature type="topological domain" description="Extracellular" evidence="4">
    <location>
        <begin position="176"/>
        <end position="178"/>
    </location>
</feature>
<feature type="intramembrane region" description="Discontinuously helical" evidence="4 18">
    <location>
        <begin position="179"/>
        <end position="193"/>
    </location>
</feature>
<feature type="topological domain" description="Extracellular" evidence="4">
    <location>
        <begin position="194"/>
        <end position="200"/>
    </location>
</feature>
<feature type="transmembrane region" description="Helical; Name=6" evidence="4 18">
    <location>
        <begin position="201"/>
        <end position="222"/>
    </location>
</feature>
<feature type="topological domain" description="Cytoplasmic" evidence="4">
    <location>
        <begin position="223"/>
        <end position="263"/>
    </location>
</feature>
<feature type="region of interest" description="Interaction with CALM" evidence="7">
    <location>
        <begin position="227"/>
        <end position="237"/>
    </location>
</feature>
<feature type="region of interest" description="Disordered" evidence="3">
    <location>
        <begin position="239"/>
        <end position="263"/>
    </location>
</feature>
<feature type="short sequence motif" description="NPA 1" evidence="17">
    <location>
        <begin position="68"/>
        <end position="70"/>
    </location>
</feature>
<feature type="short sequence motif" description="NPA 2" evidence="17">
    <location>
        <begin position="184"/>
        <end position="186"/>
    </location>
</feature>
<feature type="site" description="Important for water channel gating" evidence="7">
    <location>
        <position position="149"/>
    </location>
</feature>
<feature type="site" description="Interaction with BFSP1" evidence="9">
    <location>
        <position position="246"/>
    </location>
</feature>
<feature type="site" description="interaction with BFSP1" evidence="9">
    <location>
        <position position="250"/>
    </location>
</feature>
<feature type="modified residue" description="Phosphoserine" evidence="12">
    <location>
        <position position="235"/>
    </location>
</feature>
<feature type="modified residue" description="Phosphoserine; by PKA" evidence="6">
    <location>
        <position position="243"/>
    </location>
</feature>
<feature type="modified residue" description="Phosphoserine" evidence="6">
    <location>
        <position position="245"/>
    </location>
</feature>
<feature type="modified residue" description="Deamidated asparagine" evidence="6">
    <location>
        <position position="246"/>
    </location>
</feature>
<feature type="mutagenesis site" description="Increases constitutive water permeability. Abolishes regulation by cytoplasmic calcium levels." evidence="7">
    <original>Y</original>
    <variation>G</variation>
    <location>
        <position position="149"/>
    </location>
</feature>
<feature type="mutagenesis site" description="Strongly decreases water permeability. Abolishes regulation by cytoplasmic calcium levels." evidence="7">
    <original>Y</original>
    <variation>L</variation>
    <location>
        <position position="149"/>
    </location>
</feature>
<feature type="mutagenesis site" description="Slightly decreases water permeability, but has a minor effect on the regulation by cytoplasmic calcium levels." evidence="7">
    <original>Y</original>
    <variation>S</variation>
    <location>
        <position position="149"/>
    </location>
</feature>
<feature type="mutagenesis site" description="Strongly reduced CALM binding." evidence="7">
    <original>L</original>
    <variation>A</variation>
    <location>
        <position position="227"/>
    </location>
</feature>
<feature type="mutagenesis site" description="Strongly reduced CALM binding." evidence="7">
    <original>V</original>
    <variation>A</variation>
    <location>
        <position position="230"/>
    </location>
</feature>
<feature type="sequence conflict" description="In Ref. 2; AA sequence." evidence="16" ref="2">
    <original>C</original>
    <variation>L</variation>
    <location>
        <position position="14"/>
    </location>
</feature>
<feature type="sequence conflict" description="In Ref. 2; AA sequence." evidence="16" ref="2">
    <original>GASLR</original>
    <variation>RAFLL</variation>
    <location>
        <begin position="29"/>
        <end position="33"/>
    </location>
</feature>
<feature type="helix" evidence="19">
    <location>
        <begin position="10"/>
        <end position="31"/>
    </location>
</feature>
<feature type="helix" evidence="19">
    <location>
        <begin position="38"/>
        <end position="59"/>
    </location>
</feature>
<feature type="turn" evidence="19">
    <location>
        <begin position="60"/>
        <end position="63"/>
    </location>
</feature>
<feature type="helix" evidence="19">
    <location>
        <begin position="69"/>
        <end position="77"/>
    </location>
</feature>
<feature type="helix" evidence="19">
    <location>
        <begin position="83"/>
        <end position="107"/>
    </location>
</feature>
<feature type="turn" evidence="19">
    <location>
        <begin position="110"/>
        <end position="112"/>
    </location>
</feature>
<feature type="turn" evidence="19">
    <location>
        <begin position="114"/>
        <end position="117"/>
    </location>
</feature>
<feature type="helix" evidence="19">
    <location>
        <begin position="127"/>
        <end position="149"/>
    </location>
</feature>
<feature type="helix" evidence="19">
    <location>
        <begin position="160"/>
        <end position="179"/>
    </location>
</feature>
<feature type="helix" evidence="19">
    <location>
        <begin position="185"/>
        <end position="195"/>
    </location>
</feature>
<feature type="turn" evidence="19">
    <location>
        <begin position="199"/>
        <end position="202"/>
    </location>
</feature>
<feature type="helix" evidence="19">
    <location>
        <begin position="203"/>
        <end position="220"/>
    </location>
</feature>
<feature type="turn" evidence="19">
    <location>
        <begin position="221"/>
        <end position="223"/>
    </location>
</feature>
<feature type="helix" evidence="19">
    <location>
        <begin position="230"/>
        <end position="238"/>
    </location>
</feature>
<evidence type="ECO:0000250" key="1">
    <source>
        <dbReference type="UniProtKB" id="P30301"/>
    </source>
</evidence>
<evidence type="ECO:0000250" key="2">
    <source>
        <dbReference type="UniProtKB" id="Q6J8I9"/>
    </source>
</evidence>
<evidence type="ECO:0000256" key="3">
    <source>
        <dbReference type="SAM" id="MobiDB-lite"/>
    </source>
</evidence>
<evidence type="ECO:0000269" key="4">
    <source>
    </source>
</evidence>
<evidence type="ECO:0000269" key="5">
    <source>
    </source>
</evidence>
<evidence type="ECO:0000269" key="6">
    <source>
    </source>
</evidence>
<evidence type="ECO:0000269" key="7">
    <source>
    </source>
</evidence>
<evidence type="ECO:0000269" key="8">
    <source>
    </source>
</evidence>
<evidence type="ECO:0000269" key="9">
    <source>
    </source>
</evidence>
<evidence type="ECO:0000269" key="10">
    <source>
    </source>
</evidence>
<evidence type="ECO:0000269" key="11">
    <source>
    </source>
</evidence>
<evidence type="ECO:0000269" key="12">
    <source>
    </source>
</evidence>
<evidence type="ECO:0000303" key="13">
    <source>
    </source>
</evidence>
<evidence type="ECO:0000303" key="14">
    <source>
    </source>
</evidence>
<evidence type="ECO:0000303" key="15">
    <source>
    </source>
</evidence>
<evidence type="ECO:0000305" key="16"/>
<evidence type="ECO:0000305" key="17">
    <source>
    </source>
</evidence>
<evidence type="ECO:0007744" key="18">
    <source>
        <dbReference type="PDB" id="1YMG"/>
    </source>
</evidence>
<evidence type="ECO:0007829" key="19">
    <source>
        <dbReference type="PDB" id="1YMG"/>
    </source>
</evidence>
<accession>P06624</accession>
<organism>
    <name type="scientific">Bos taurus</name>
    <name type="common">Bovine</name>
    <dbReference type="NCBI Taxonomy" id="9913"/>
    <lineage>
        <taxon>Eukaryota</taxon>
        <taxon>Metazoa</taxon>
        <taxon>Chordata</taxon>
        <taxon>Craniata</taxon>
        <taxon>Vertebrata</taxon>
        <taxon>Euteleostomi</taxon>
        <taxon>Mammalia</taxon>
        <taxon>Eutheria</taxon>
        <taxon>Laurasiatheria</taxon>
        <taxon>Artiodactyla</taxon>
        <taxon>Ruminantia</taxon>
        <taxon>Pecora</taxon>
        <taxon>Bovidae</taxon>
        <taxon>Bovinae</taxon>
        <taxon>Bos</taxon>
    </lineage>
</organism>
<name>MIP_BOVIN</name>
<protein>
    <recommendedName>
        <fullName evidence="15">Lens fiber major intrinsic protein</fullName>
    </recommendedName>
    <alternativeName>
        <fullName evidence="13">Aquaporin-0</fullName>
    </alternativeName>
    <alternativeName>
        <fullName>MIP26</fullName>
        <shortName evidence="14">MP26</shortName>
    </alternativeName>
</protein>
<proteinExistence type="evidence at protein level"/>
<dbReference type="EMBL" id="K02818">
    <property type="protein sequence ID" value="AAA30622.1"/>
    <property type="molecule type" value="mRNA"/>
</dbReference>
<dbReference type="PIR" id="A23251">
    <property type="entry name" value="MMBOLM"/>
</dbReference>
<dbReference type="RefSeq" id="NP_776362.1">
    <property type="nucleotide sequence ID" value="NM_173937.2"/>
</dbReference>
<dbReference type="PDB" id="1YMG">
    <property type="method" value="X-ray"/>
    <property type="resolution" value="2.24 A"/>
    <property type="chains" value="A=1-263"/>
</dbReference>
<dbReference type="PDB" id="2C32">
    <property type="method" value="X-ray"/>
    <property type="resolution" value="7.01 A"/>
    <property type="chains" value="A=1-263"/>
</dbReference>
<dbReference type="PDBsum" id="1YMG"/>
<dbReference type="PDBsum" id="2C32"/>
<dbReference type="SMR" id="P06624"/>
<dbReference type="DIP" id="DIP-60546N"/>
<dbReference type="FunCoup" id="P06624">
    <property type="interactions" value="109"/>
</dbReference>
<dbReference type="IntAct" id="P06624">
    <property type="interactions" value="1"/>
</dbReference>
<dbReference type="STRING" id="9913.ENSBTAP00000013360"/>
<dbReference type="TCDB" id="1.A.8.8.2">
    <property type="family name" value="the major intrinsic protein (mip) family"/>
</dbReference>
<dbReference type="iPTMnet" id="P06624"/>
<dbReference type="PaxDb" id="9913-ENSBTAP00000013360"/>
<dbReference type="Ensembl" id="ENSBTAT00000013360.4">
    <property type="protein sequence ID" value="ENSBTAP00000013360.2"/>
    <property type="gene ID" value="ENSBTAG00000010127.4"/>
</dbReference>
<dbReference type="GeneID" id="280859"/>
<dbReference type="KEGG" id="bta:280859"/>
<dbReference type="CTD" id="4284"/>
<dbReference type="VEuPathDB" id="HostDB:ENSBTAG00000010127"/>
<dbReference type="VGNC" id="VGNC:31482">
    <property type="gene designation" value="MIP"/>
</dbReference>
<dbReference type="eggNOG" id="KOG0223">
    <property type="taxonomic scope" value="Eukaryota"/>
</dbReference>
<dbReference type="GeneTree" id="ENSGT00940000156260"/>
<dbReference type="HOGENOM" id="CLU_020019_3_3_1"/>
<dbReference type="InParanoid" id="P06624"/>
<dbReference type="OMA" id="LALNTMH"/>
<dbReference type="OrthoDB" id="3222at2759"/>
<dbReference type="TreeFam" id="TF312940"/>
<dbReference type="Reactome" id="R-BTA-432047">
    <property type="pathway name" value="Passive transport by Aquaporins"/>
</dbReference>
<dbReference type="EvolutionaryTrace" id="P06624"/>
<dbReference type="Proteomes" id="UP000009136">
    <property type="component" value="Chromosome 5"/>
</dbReference>
<dbReference type="Bgee" id="ENSBTAG00000010127">
    <property type="expression patterns" value="Expressed in pigment epithelium of eye and 32 other cell types or tissues"/>
</dbReference>
<dbReference type="GO" id="GO:0070161">
    <property type="term" value="C:anchoring junction"/>
    <property type="evidence" value="ECO:0007669"/>
    <property type="project" value="UniProtKB-SubCell"/>
</dbReference>
<dbReference type="GO" id="GO:0016324">
    <property type="term" value="C:apical plasma membrane"/>
    <property type="evidence" value="ECO:0000318"/>
    <property type="project" value="GO_Central"/>
</dbReference>
<dbReference type="GO" id="GO:0005886">
    <property type="term" value="C:plasma membrane"/>
    <property type="evidence" value="ECO:0000315"/>
    <property type="project" value="UniProtKB"/>
</dbReference>
<dbReference type="GO" id="GO:0005516">
    <property type="term" value="F:calmodulin binding"/>
    <property type="evidence" value="ECO:0000315"/>
    <property type="project" value="UniProtKB"/>
</dbReference>
<dbReference type="GO" id="GO:0098631">
    <property type="term" value="F:cell adhesion mediator activity"/>
    <property type="evidence" value="ECO:0000250"/>
    <property type="project" value="UniProtKB"/>
</dbReference>
<dbReference type="GO" id="GO:0005212">
    <property type="term" value="F:structural constituent of eye lens"/>
    <property type="evidence" value="ECO:0007669"/>
    <property type="project" value="UniProtKB-KW"/>
</dbReference>
<dbReference type="GO" id="GO:0015250">
    <property type="term" value="F:water channel activity"/>
    <property type="evidence" value="ECO:0000315"/>
    <property type="project" value="UniProtKB"/>
</dbReference>
<dbReference type="GO" id="GO:1990349">
    <property type="term" value="P:gap junction-mediated intercellular transport"/>
    <property type="evidence" value="ECO:0007669"/>
    <property type="project" value="Ensembl"/>
</dbReference>
<dbReference type="GO" id="GO:0034109">
    <property type="term" value="P:homotypic cell-cell adhesion"/>
    <property type="evidence" value="ECO:0000250"/>
    <property type="project" value="UniProtKB"/>
</dbReference>
<dbReference type="GO" id="GO:0002088">
    <property type="term" value="P:lens development in camera-type eye"/>
    <property type="evidence" value="ECO:0007669"/>
    <property type="project" value="Ensembl"/>
</dbReference>
<dbReference type="GO" id="GO:0036438">
    <property type="term" value="P:maintenance of lens transparency"/>
    <property type="evidence" value="ECO:0000250"/>
    <property type="project" value="UniProtKB"/>
</dbReference>
<dbReference type="GO" id="GO:0007601">
    <property type="term" value="P:visual perception"/>
    <property type="evidence" value="ECO:0007669"/>
    <property type="project" value="Ensembl"/>
</dbReference>
<dbReference type="GO" id="GO:0006833">
    <property type="term" value="P:water transport"/>
    <property type="evidence" value="ECO:0000315"/>
    <property type="project" value="UniProtKB"/>
</dbReference>
<dbReference type="CDD" id="cd00333">
    <property type="entry name" value="MIP"/>
    <property type="match status" value="1"/>
</dbReference>
<dbReference type="FunFam" id="1.20.1080.10:FF:000003">
    <property type="entry name" value="Lens fiber major intrinsic"/>
    <property type="match status" value="1"/>
</dbReference>
<dbReference type="Gene3D" id="1.20.1080.10">
    <property type="entry name" value="Glycerol uptake facilitator protein"/>
    <property type="match status" value="1"/>
</dbReference>
<dbReference type="InterPro" id="IPR023271">
    <property type="entry name" value="Aquaporin-like"/>
</dbReference>
<dbReference type="InterPro" id="IPR034294">
    <property type="entry name" value="Aquaporin_transptr"/>
</dbReference>
<dbReference type="InterPro" id="IPR000425">
    <property type="entry name" value="MIP"/>
</dbReference>
<dbReference type="InterPro" id="IPR022357">
    <property type="entry name" value="MIP_CS"/>
</dbReference>
<dbReference type="NCBIfam" id="TIGR00861">
    <property type="entry name" value="MIP"/>
    <property type="match status" value="1"/>
</dbReference>
<dbReference type="PANTHER" id="PTHR19139">
    <property type="entry name" value="AQUAPORIN TRANSPORTER"/>
    <property type="match status" value="1"/>
</dbReference>
<dbReference type="PANTHER" id="PTHR19139:SF39">
    <property type="entry name" value="LENS FIBER MAJOR INTRINSIC PROTEIN"/>
    <property type="match status" value="1"/>
</dbReference>
<dbReference type="Pfam" id="PF00230">
    <property type="entry name" value="MIP"/>
    <property type="match status" value="1"/>
</dbReference>
<dbReference type="PRINTS" id="PR02014">
    <property type="entry name" value="AQUAPORIN2"/>
</dbReference>
<dbReference type="PRINTS" id="PR00783">
    <property type="entry name" value="MINTRINSICP"/>
</dbReference>
<dbReference type="SUPFAM" id="SSF81338">
    <property type="entry name" value="Aquaporin-like"/>
    <property type="match status" value="1"/>
</dbReference>
<dbReference type="PROSITE" id="PS00221">
    <property type="entry name" value="MIP"/>
    <property type="match status" value="1"/>
</dbReference>